<evidence type="ECO:0000255" key="1">
    <source>
        <dbReference type="HAMAP-Rule" id="MF_00385"/>
    </source>
</evidence>
<evidence type="ECO:0000305" key="2"/>
<keyword id="KW-1185">Reference proteome</keyword>
<keyword id="KW-0687">Ribonucleoprotein</keyword>
<keyword id="KW-0689">Ribosomal protein</keyword>
<dbReference type="EMBL" id="CP000448">
    <property type="protein sequence ID" value="ABI68800.1"/>
    <property type="molecule type" value="Genomic_DNA"/>
</dbReference>
<dbReference type="RefSeq" id="WP_011640899.1">
    <property type="nucleotide sequence ID" value="NC_008346.1"/>
</dbReference>
<dbReference type="SMR" id="Q0AWV4"/>
<dbReference type="STRING" id="335541.Swol_1497"/>
<dbReference type="KEGG" id="swo:Swol_1497"/>
<dbReference type="eggNOG" id="COG0228">
    <property type="taxonomic scope" value="Bacteria"/>
</dbReference>
<dbReference type="HOGENOM" id="CLU_100590_5_0_9"/>
<dbReference type="OrthoDB" id="9807878at2"/>
<dbReference type="Proteomes" id="UP000001968">
    <property type="component" value="Chromosome"/>
</dbReference>
<dbReference type="GO" id="GO:0005737">
    <property type="term" value="C:cytoplasm"/>
    <property type="evidence" value="ECO:0007669"/>
    <property type="project" value="UniProtKB-ARBA"/>
</dbReference>
<dbReference type="GO" id="GO:0015935">
    <property type="term" value="C:small ribosomal subunit"/>
    <property type="evidence" value="ECO:0007669"/>
    <property type="project" value="TreeGrafter"/>
</dbReference>
<dbReference type="GO" id="GO:0003735">
    <property type="term" value="F:structural constituent of ribosome"/>
    <property type="evidence" value="ECO:0007669"/>
    <property type="project" value="InterPro"/>
</dbReference>
<dbReference type="GO" id="GO:0006412">
    <property type="term" value="P:translation"/>
    <property type="evidence" value="ECO:0007669"/>
    <property type="project" value="UniProtKB-UniRule"/>
</dbReference>
<dbReference type="FunFam" id="3.30.1320.10:FF:000002">
    <property type="entry name" value="30S ribosomal protein S16"/>
    <property type="match status" value="1"/>
</dbReference>
<dbReference type="Gene3D" id="3.30.1320.10">
    <property type="match status" value="1"/>
</dbReference>
<dbReference type="HAMAP" id="MF_00385">
    <property type="entry name" value="Ribosomal_bS16"/>
    <property type="match status" value="1"/>
</dbReference>
<dbReference type="InterPro" id="IPR000307">
    <property type="entry name" value="Ribosomal_bS16"/>
</dbReference>
<dbReference type="InterPro" id="IPR023803">
    <property type="entry name" value="Ribosomal_bS16_dom_sf"/>
</dbReference>
<dbReference type="NCBIfam" id="TIGR00002">
    <property type="entry name" value="S16"/>
    <property type="match status" value="1"/>
</dbReference>
<dbReference type="PANTHER" id="PTHR12919">
    <property type="entry name" value="30S RIBOSOMAL PROTEIN S16"/>
    <property type="match status" value="1"/>
</dbReference>
<dbReference type="PANTHER" id="PTHR12919:SF20">
    <property type="entry name" value="SMALL RIBOSOMAL SUBUNIT PROTEIN BS16M"/>
    <property type="match status" value="1"/>
</dbReference>
<dbReference type="Pfam" id="PF00886">
    <property type="entry name" value="Ribosomal_S16"/>
    <property type="match status" value="1"/>
</dbReference>
<dbReference type="SUPFAM" id="SSF54565">
    <property type="entry name" value="Ribosomal protein S16"/>
    <property type="match status" value="1"/>
</dbReference>
<comment type="similarity">
    <text evidence="1">Belongs to the bacterial ribosomal protein bS16 family.</text>
</comment>
<gene>
    <name evidence="1" type="primary">rpsP</name>
    <name type="ordered locus">Swol_1497</name>
</gene>
<protein>
    <recommendedName>
        <fullName evidence="1">Small ribosomal subunit protein bS16</fullName>
    </recommendedName>
    <alternativeName>
        <fullName evidence="2">30S ribosomal protein S16</fullName>
    </alternativeName>
</protein>
<proteinExistence type="inferred from homology"/>
<feature type="chain" id="PRO_1000049370" description="Small ribosomal subunit protein bS16">
    <location>
        <begin position="1"/>
        <end position="88"/>
    </location>
</feature>
<name>RS16_SYNWW</name>
<organism>
    <name type="scientific">Syntrophomonas wolfei subsp. wolfei (strain DSM 2245B / Goettingen)</name>
    <dbReference type="NCBI Taxonomy" id="335541"/>
    <lineage>
        <taxon>Bacteria</taxon>
        <taxon>Bacillati</taxon>
        <taxon>Bacillota</taxon>
        <taxon>Clostridia</taxon>
        <taxon>Eubacteriales</taxon>
        <taxon>Syntrophomonadaceae</taxon>
        <taxon>Syntrophomonas</taxon>
    </lineage>
</organism>
<accession>Q0AWV4</accession>
<reference key="1">
    <citation type="journal article" date="2010" name="Environ. Microbiol.">
        <title>The genome of Syntrophomonas wolfei: new insights into syntrophic metabolism and biohydrogen production.</title>
        <authorList>
            <person name="Sieber J.R."/>
            <person name="Sims D.R."/>
            <person name="Han C."/>
            <person name="Kim E."/>
            <person name="Lykidis A."/>
            <person name="Lapidus A.L."/>
            <person name="McDonnald E."/>
            <person name="Rohlin L."/>
            <person name="Culley D.E."/>
            <person name="Gunsalus R."/>
            <person name="McInerney M.J."/>
        </authorList>
    </citation>
    <scope>NUCLEOTIDE SEQUENCE [LARGE SCALE GENOMIC DNA]</scope>
    <source>
        <strain>DSM 2245B / Goettingen</strain>
    </source>
</reference>
<sequence length="88" mass="10077">MATRIRLRRMGAKKSPFYRLVVADSRYPRDGRFIEELGYYNPSTTPATVKIDEEKALKWLASGAKPSDTARSLLQKQGIMARFAEIRK</sequence>